<evidence type="ECO:0000255" key="1"/>
<evidence type="ECO:0000269" key="2">
    <source>
    </source>
</evidence>
<evidence type="ECO:0000269" key="3">
    <source>
    </source>
</evidence>
<evidence type="ECO:0000269" key="4">
    <source>
    </source>
</evidence>
<evidence type="ECO:0000269" key="5">
    <source>
    </source>
</evidence>
<evidence type="ECO:0000303" key="6">
    <source>
    </source>
</evidence>
<evidence type="ECO:0000305" key="7"/>
<evidence type="ECO:0000305" key="8">
    <source>
    </source>
</evidence>
<protein>
    <recommendedName>
        <fullName>HAUS augmin-like complex subunit 1</fullName>
    </recommendedName>
    <alternativeName>
        <fullName>Coiled-coil domain-containing protein 5</fullName>
    </alternativeName>
    <alternativeName>
        <fullName>Enhancer of invasion-cluster</fullName>
        <shortName>HEI-C</shortName>
    </alternativeName>
</protein>
<name>HAUS1_HUMAN</name>
<comment type="function">
    <text evidence="2 3 4">Contributes to mitotic spindle assembly, maintenance of centrosome integrity and completion of cytokinesis as part of the HAUS augmin-like complex.</text>
</comment>
<comment type="subunit">
    <text evidence="2 3 4 5">Component of the HAUS augmin-like complex. The complex interacts with the gamma-tubulin ring complex and this interaction is required for spindle assembly. Associates with microtubules. The interaction with microtubules is strong during mitosis, while it is weak or absent during interphase. It is unclear whether this interaction is direct or indirect. Interacts with EML3 (phosphorylated at 'Thr-881') (PubMed:30723163).</text>
</comment>
<comment type="interaction">
    <interactant intactId="EBI-2514791">
        <id>Q96CS2</id>
    </interactant>
    <interactant intactId="EBI-8466265">
        <id>Q96MA6</id>
        <label>AK8</label>
    </interactant>
    <organismsDiffer>false</organismsDiffer>
    <experiments>3</experiments>
</comment>
<comment type="interaction">
    <interactant intactId="EBI-2514791">
        <id>Q96CS2</id>
    </interactant>
    <interactant intactId="EBI-638194">
        <id>P53365</id>
        <label>ARFIP2</label>
    </interactant>
    <organismsDiffer>false</organismsDiffer>
    <experiments>3</experiments>
</comment>
<comment type="interaction">
    <interactant intactId="EBI-2514791">
        <id>Q96CS2</id>
    </interactant>
    <interactant intactId="EBI-2684998">
        <id>Q9Y5K8</id>
        <label>ATP6V1D</label>
    </interactant>
    <organismsDiffer>false</organismsDiffer>
    <experiments>3</experiments>
</comment>
<comment type="interaction">
    <interactant intactId="EBI-2514791">
        <id>Q96CS2</id>
    </interactant>
    <interactant intactId="EBI-10988864">
        <id>P46379-2</id>
        <label>BAG6</label>
    </interactant>
    <organismsDiffer>false</organismsDiffer>
    <experiments>3</experiments>
</comment>
<comment type="interaction">
    <interactant intactId="EBI-2514791">
        <id>Q96CS2</id>
    </interactant>
    <interactant intactId="EBI-10229433">
        <id>Q13515</id>
        <label>BFSP2</label>
    </interactant>
    <organismsDiffer>false</organismsDiffer>
    <experiments>5</experiments>
</comment>
<comment type="interaction">
    <interactant intactId="EBI-2514791">
        <id>Q96CS2</id>
    </interactant>
    <interactant intactId="EBI-465781">
        <id>Q9UL45</id>
        <label>BLOC1S6</label>
    </interactant>
    <organismsDiffer>false</organismsDiffer>
    <experiments>3</experiments>
</comment>
<comment type="interaction">
    <interactant intactId="EBI-2514791">
        <id>Q96CS2</id>
    </interactant>
    <interactant intactId="EBI-10193358">
        <id>Q96GS4</id>
        <label>BORCS6</label>
    </interactant>
    <organismsDiffer>false</organismsDiffer>
    <experiments>3</experiments>
</comment>
<comment type="interaction">
    <interactant intactId="EBI-2514791">
        <id>Q96CS2</id>
    </interactant>
    <interactant intactId="EBI-2837036">
        <id>Q6ZUJ4</id>
        <label>C3orf62</label>
    </interactant>
    <organismsDiffer>false</organismsDiffer>
    <experiments>4</experiments>
</comment>
<comment type="interaction">
    <interactant intactId="EBI-2514791">
        <id>Q96CS2</id>
    </interactant>
    <interactant intactId="EBI-10196469">
        <id>Q8TC20</id>
        <label>CAGE1</label>
    </interactant>
    <organismsDiffer>false</organismsDiffer>
    <experiments>3</experiments>
</comment>
<comment type="interaction">
    <interactant intactId="EBI-2514791">
        <id>Q96CS2</id>
    </interactant>
    <interactant intactId="EBI-741724">
        <id>Q8NA61</id>
        <label>CBY2</label>
    </interactant>
    <organismsDiffer>false</organismsDiffer>
    <experiments>3</experiments>
</comment>
<comment type="interaction">
    <interactant intactId="EBI-2514791">
        <id>Q96CS2</id>
    </interactant>
    <interactant intactId="EBI-10171416">
        <id>Q96JN2-2</id>
        <label>CCDC136</label>
    </interactant>
    <organismsDiffer>false</organismsDiffer>
    <experiments>3</experiments>
</comment>
<comment type="interaction">
    <interactant intactId="EBI-2514791">
        <id>Q96CS2</id>
    </interactant>
    <interactant intactId="EBI-2808286">
        <id>Q2TAC2</id>
        <label>CCDC57</label>
    </interactant>
    <organismsDiffer>false</organismsDiffer>
    <experiments>3</experiments>
</comment>
<comment type="interaction">
    <interactant intactId="EBI-2514791">
        <id>Q96CS2</id>
    </interactant>
    <interactant intactId="EBI-10175300">
        <id>Q8TD31-3</id>
        <label>CCHCR1</label>
    </interactant>
    <organismsDiffer>false</organismsDiffer>
    <experiments>6</experiments>
</comment>
<comment type="interaction">
    <interactant intactId="EBI-2514791">
        <id>Q96CS2</id>
    </interactant>
    <interactant intactId="EBI-1181367">
        <id>Q01850</id>
        <label>CDR2</label>
    </interactant>
    <organismsDiffer>false</organismsDiffer>
    <experiments>3</experiments>
</comment>
<comment type="interaction">
    <interactant intactId="EBI-2514791">
        <id>Q96CS2</id>
    </interactant>
    <interactant intactId="EBI-10250303">
        <id>Q6IPU0</id>
        <label>CENPP</label>
    </interactant>
    <organismsDiffer>false</organismsDiffer>
    <experiments>5</experiments>
</comment>
<comment type="interaction">
    <interactant intactId="EBI-2514791">
        <id>Q96CS2</id>
    </interactant>
    <interactant intactId="EBI-743488">
        <id>Q96L14</id>
        <label>CEP170P1</label>
    </interactant>
    <organismsDiffer>false</organismsDiffer>
    <experiments>3</experiments>
</comment>
<comment type="interaction">
    <interactant intactId="EBI-2514791">
        <id>Q96CS2</id>
    </interactant>
    <interactant intactId="EBI-744115">
        <id>Q9C0F1</id>
        <label>CEP44</label>
    </interactant>
    <organismsDiffer>false</organismsDiffer>
    <experiments>4</experiments>
</comment>
<comment type="interaction">
    <interactant intactId="EBI-2514791">
        <id>Q96CS2</id>
    </interactant>
    <interactant intactId="EBI-747776">
        <id>Q53EZ4</id>
        <label>CEP55</label>
    </interactant>
    <organismsDiffer>false</organismsDiffer>
    <experiments>3</experiments>
</comment>
<comment type="interaction">
    <interactant intactId="EBI-2514791">
        <id>Q96CS2</id>
    </interactant>
    <interactant intactId="EBI-10181988">
        <id>Q8IYX8-2</id>
        <label>CEP57L1</label>
    </interactant>
    <organismsDiffer>false</organismsDiffer>
    <experiments>3</experiments>
</comment>
<comment type="interaction">
    <interactant intactId="EBI-2514791">
        <id>Q96CS2</id>
    </interactant>
    <interactant intactId="EBI-741977">
        <id>Q96MT8</id>
        <label>CEP63</label>
    </interactant>
    <organismsDiffer>false</organismsDiffer>
    <experiments>4</experiments>
</comment>
<comment type="interaction">
    <interactant intactId="EBI-2514791">
        <id>Q96CS2</id>
    </interactant>
    <interactant intactId="EBI-739624">
        <id>Q8NHQ1</id>
        <label>CEP70</label>
    </interactant>
    <organismsDiffer>false</organismsDiffer>
    <experiments>3</experiments>
</comment>
<comment type="interaction">
    <interactant intactId="EBI-2514791">
        <id>Q96CS2</id>
    </interactant>
    <interactant intactId="EBI-10283772">
        <id>Q6IAZ5</id>
        <label>CRSP9</label>
    </interactant>
    <organismsDiffer>false</organismsDiffer>
    <experiments>3</experiments>
</comment>
<comment type="interaction">
    <interactant intactId="EBI-2514791">
        <id>Q96CS2</id>
    </interactant>
    <interactant intactId="EBI-715074">
        <id>Q13561</id>
        <label>DCTN2</label>
    </interactant>
    <organismsDiffer>false</organismsDiffer>
    <experiments>3</experiments>
</comment>
<comment type="interaction">
    <interactant intactId="EBI-2514791">
        <id>Q96CS2</id>
    </interactant>
    <interactant intactId="EBI-295827">
        <id>P11532</id>
        <label>DMD</label>
    </interactant>
    <organismsDiffer>false</organismsDiffer>
    <experiments>5</experiments>
</comment>
<comment type="interaction">
    <interactant intactId="EBI-2514791">
        <id>Q96CS2</id>
    </interactant>
    <interactant intactId="EBI-12593112">
        <id>O75190-2</id>
        <label>DNAJB6</label>
    </interactant>
    <organismsDiffer>false</organismsDiffer>
    <experiments>3</experiments>
</comment>
<comment type="interaction">
    <interactant intactId="EBI-2514791">
        <id>Q96CS2</id>
    </interactant>
    <interactant intactId="EBI-465804">
        <id>Q96EV8</id>
        <label>DTNBP1</label>
    </interactant>
    <organismsDiffer>false</organismsDiffer>
    <experiments>3</experiments>
</comment>
<comment type="interaction">
    <interactant intactId="EBI-2514791">
        <id>Q96CS2</id>
    </interactant>
    <interactant intactId="EBI-7225287">
        <id>Q96MY7</id>
        <label>FAM161B</label>
    </interactant>
    <organismsDiffer>false</organismsDiffer>
    <experiments>3</experiments>
</comment>
<comment type="interaction">
    <interactant intactId="EBI-2514791">
        <id>Q96CS2</id>
    </interactant>
    <interactant intactId="EBI-1104764">
        <id>Q9NVK5</id>
        <label>FGFR1OP2</label>
    </interactant>
    <organismsDiffer>false</organismsDiffer>
    <experiments>3</experiments>
</comment>
<comment type="interaction">
    <interactant intactId="EBI-2514791">
        <id>Q96CS2</id>
    </interactant>
    <interactant intactId="EBI-348399">
        <id>P22607</id>
        <label>FGFR3</label>
    </interactant>
    <organismsDiffer>false</organismsDiffer>
    <experiments>3</experiments>
</comment>
<comment type="interaction">
    <interactant intactId="EBI-2514791">
        <id>Q96CS2</id>
    </interactant>
    <interactant intactId="EBI-618309">
        <id>Q08379</id>
        <label>GOLGA2</label>
    </interactant>
    <organismsDiffer>false</organismsDiffer>
    <experiments>3</experiments>
</comment>
<comment type="interaction">
    <interactant intactId="EBI-2514791">
        <id>Q96CS2</id>
    </interactant>
    <interactant intactId="EBI-8285963">
        <id>Q14957</id>
        <label>GRIN2C</label>
    </interactant>
    <organismsDiffer>false</organismsDiffer>
    <experiments>3</experiments>
</comment>
<comment type="interaction">
    <interactant intactId="EBI-2514791">
        <id>Q96CS2</id>
    </interactant>
    <interactant intactId="EBI-351506">
        <id>P06396</id>
        <label>GSN</label>
    </interactant>
    <organismsDiffer>false</organismsDiffer>
    <experiments>3</experiments>
</comment>
<comment type="interaction">
    <interactant intactId="EBI-2514791">
        <id>Q96CS2</id>
    </interactant>
    <interactant intactId="EBI-2558168">
        <id>Q9H6D7</id>
        <label>HAUS4</label>
    </interactant>
    <organismsDiffer>false</organismsDiffer>
    <experiments>11</experiments>
</comment>
<comment type="interaction">
    <interactant intactId="EBI-2514791">
        <id>Q96CS2</id>
    </interactant>
    <interactant intactId="EBI-2558196">
        <id>Q7Z4H7</id>
        <label>HAUS6</label>
    </interactant>
    <organismsDiffer>false</organismsDiffer>
    <experiments>11</experiments>
</comment>
<comment type="interaction">
    <interactant intactId="EBI-2514791">
        <id>Q96CS2</id>
    </interactant>
    <interactant intactId="EBI-740220">
        <id>O14964</id>
        <label>HGS</label>
    </interactant>
    <organismsDiffer>false</organismsDiffer>
    <experiments>3</experiments>
</comment>
<comment type="interaction">
    <interactant intactId="EBI-2514791">
        <id>Q96CS2</id>
    </interactant>
    <interactant intactId="EBI-350145">
        <id>P01112</id>
        <label>HRAS</label>
    </interactant>
    <organismsDiffer>false</organismsDiffer>
    <experiments>3</experiments>
</comment>
<comment type="interaction">
    <interactant intactId="EBI-2514791">
        <id>Q96CS2</id>
    </interactant>
    <interactant intactId="EBI-745127">
        <id>O14879</id>
        <label>IFIT3</label>
    </interactant>
    <organismsDiffer>false</organismsDiffer>
    <experiments>3</experiments>
</comment>
<comment type="interaction">
    <interactant intactId="EBI-2514791">
        <id>Q96CS2</id>
    </interactant>
    <interactant intactId="EBI-744203">
        <id>Q8IY31</id>
        <label>IFT20</label>
    </interactant>
    <organismsDiffer>false</organismsDiffer>
    <experiments>7</experiments>
</comment>
<comment type="interaction">
    <interactant intactId="EBI-2514791">
        <id>Q96CS2</id>
    </interactant>
    <interactant intactId="EBI-6509505">
        <id>Q0VD86</id>
        <label>INCA1</label>
    </interactant>
    <organismsDiffer>false</organismsDiffer>
    <experiments>3</experiments>
</comment>
<comment type="interaction">
    <interactant intactId="EBI-2514791">
        <id>Q96CS2</id>
    </interactant>
    <interactant intactId="EBI-710124">
        <id>O60341</id>
        <label>KDM1A</label>
    </interactant>
    <organismsDiffer>false</organismsDiffer>
    <experiments>2</experiments>
</comment>
<comment type="interaction">
    <interactant intactId="EBI-2514791">
        <id>Q96CS2</id>
    </interactant>
    <interactant intactId="EBI-2125614">
        <id>Q9BVG8</id>
        <label>KIFC3</label>
    </interactant>
    <organismsDiffer>false</organismsDiffer>
    <experiments>3</experiments>
</comment>
<comment type="interaction">
    <interactant intactId="EBI-2514791">
        <id>Q96CS2</id>
    </interactant>
    <interactant intactId="EBI-948266">
        <id>O14901</id>
        <label>KLF11</label>
    </interactant>
    <organismsDiffer>false</organismsDiffer>
    <experiments>3</experiments>
</comment>
<comment type="interaction">
    <interactant intactId="EBI-2514791">
        <id>Q96CS2</id>
    </interactant>
    <interactant intactId="EBI-298429">
        <id>P04264</id>
        <label>KRT1</label>
    </interactant>
    <organismsDiffer>false</organismsDiffer>
    <experiments>3</experiments>
</comment>
<comment type="interaction">
    <interactant intactId="EBI-2514791">
        <id>Q96CS2</id>
    </interactant>
    <interactant intactId="EBI-739566">
        <id>P19012</id>
        <label>KRT15</label>
    </interactant>
    <organismsDiffer>false</organismsDiffer>
    <experiments>3</experiments>
</comment>
<comment type="interaction">
    <interactant intactId="EBI-2514791">
        <id>Q96CS2</id>
    </interactant>
    <interactant intactId="EBI-297888">
        <id>P05783</id>
        <label>KRT18</label>
    </interactant>
    <organismsDiffer>false</organismsDiffer>
    <experiments>3</experiments>
</comment>
<comment type="interaction">
    <interactant intactId="EBI-2514791">
        <id>Q96CS2</id>
    </interactant>
    <interactant intactId="EBI-742756">
        <id>P08727</id>
        <label>KRT19</label>
    </interactant>
    <organismsDiffer>false</organismsDiffer>
    <experiments>3</experiments>
</comment>
<comment type="interaction">
    <interactant intactId="EBI-2514791">
        <id>Q96CS2</id>
    </interactant>
    <interactant intactId="EBI-2430095">
        <id>P12035</id>
        <label>KRT3</label>
    </interactant>
    <organismsDiffer>false</organismsDiffer>
    <experiments>3</experiments>
</comment>
<comment type="interaction">
    <interactant intactId="EBI-2514791">
        <id>Q96CS2</id>
    </interactant>
    <interactant intactId="EBI-948001">
        <id>Q15323</id>
        <label>KRT31</label>
    </interactant>
    <organismsDiffer>false</organismsDiffer>
    <experiments>3</experiments>
</comment>
<comment type="interaction">
    <interactant intactId="EBI-2514791">
        <id>Q96CS2</id>
    </interactant>
    <interactant intactId="EBI-1047263">
        <id>O76015</id>
        <label>KRT38</label>
    </interactant>
    <organismsDiffer>false</organismsDiffer>
    <experiments>6</experiments>
</comment>
<comment type="interaction">
    <interactant intactId="EBI-2514791">
        <id>Q96CS2</id>
    </interactant>
    <interactant intactId="EBI-10171697">
        <id>Q6A162</id>
        <label>KRT40</label>
    </interactant>
    <organismsDiffer>false</organismsDiffer>
    <experiments>3</experiments>
</comment>
<comment type="interaction">
    <interactant intactId="EBI-2514791">
        <id>Q96CS2</id>
    </interactant>
    <interactant intactId="EBI-739657">
        <id>Q9BQD3</id>
        <label>KXD1</label>
    </interactant>
    <organismsDiffer>false</organismsDiffer>
    <experiments>3</experiments>
</comment>
<comment type="interaction">
    <interactant intactId="EBI-2514791">
        <id>Q96CS2</id>
    </interactant>
    <interactant intactId="EBI-740738">
        <id>O95751</id>
        <label>LDOC1</label>
    </interactant>
    <organismsDiffer>false</organismsDiffer>
    <experiments>3</experiments>
</comment>
<comment type="interaction">
    <interactant intactId="EBI-2514791">
        <id>Q96CS2</id>
    </interactant>
    <interactant intactId="EBI-741355">
        <id>Q96LR2</id>
        <label>LURAP1</label>
    </interactant>
    <organismsDiffer>false</organismsDiffer>
    <experiments>4</experiments>
</comment>
<comment type="interaction">
    <interactant intactId="EBI-2514791">
        <id>Q96CS2</id>
    </interactant>
    <interactant intactId="EBI-742610">
        <id>Q9Y6D9</id>
        <label>MAD1L1</label>
    </interactant>
    <organismsDiffer>false</organismsDiffer>
    <experiments>3</experiments>
</comment>
<comment type="interaction">
    <interactant intactId="EBI-2514791">
        <id>Q96CS2</id>
    </interactant>
    <interactant intactId="EBI-1045155">
        <id>P43360</id>
        <label>MAGEA6</label>
    </interactant>
    <organismsDiffer>false</organismsDiffer>
    <experiments>3</experiments>
</comment>
<comment type="interaction">
    <interactant intactId="EBI-2514791">
        <id>Q96CS2</id>
    </interactant>
    <interactant intactId="EBI-394607">
        <id>Q9NPJ6</id>
        <label>MED4</label>
    </interactant>
    <organismsDiffer>false</organismsDiffer>
    <experiments>4</experiments>
</comment>
<comment type="interaction">
    <interactant intactId="EBI-2514791">
        <id>Q96CS2</id>
    </interactant>
    <interactant intactId="EBI-2548751">
        <id>Q8TD10</id>
        <label>MIPOL1</label>
    </interactant>
    <organismsDiffer>false</organismsDiffer>
    <experiments>3</experiments>
</comment>
<comment type="interaction">
    <interactant intactId="EBI-2514791">
        <id>Q96CS2</id>
    </interactant>
    <interactant intactId="EBI-742948">
        <id>Q5JR59</id>
        <label>MTUS2</label>
    </interactant>
    <organismsDiffer>false</organismsDiffer>
    <experiments>3</experiments>
</comment>
<comment type="interaction">
    <interactant intactId="EBI-2514791">
        <id>Q96CS2</id>
    </interactant>
    <interactant intactId="EBI-715849">
        <id>O14777</id>
        <label>NDC80</label>
    </interactant>
    <organismsDiffer>false</organismsDiffer>
    <experiments>3</experiments>
</comment>
<comment type="interaction">
    <interactant intactId="EBI-2514791">
        <id>Q96CS2</id>
    </interactant>
    <interactant intactId="EBI-10172876">
        <id>Q7Z6G3-2</id>
        <label>NECAB2</label>
    </interactant>
    <organismsDiffer>false</organismsDiffer>
    <experiments>3</experiments>
</comment>
<comment type="interaction">
    <interactant intactId="EBI-2514791">
        <id>Q96CS2</id>
    </interactant>
    <interactant intactId="EBI-719716">
        <id>Q9Y2I6</id>
        <label>NINL</label>
    </interactant>
    <organismsDiffer>false</organismsDiffer>
    <experiments>3</experiments>
</comment>
<comment type="interaction">
    <interactant intactId="EBI-2514791">
        <id>Q96CS2</id>
    </interactant>
    <interactant intactId="EBI-741048">
        <id>Q7Z3B4</id>
        <label>NUP54</label>
    </interactant>
    <organismsDiffer>false</organismsDiffer>
    <experiments>3</experiments>
</comment>
<comment type="interaction">
    <interactant intactId="EBI-2514791">
        <id>Q96CS2</id>
    </interactant>
    <interactant intactId="EBI-2811583">
        <id>Q9BVL2</id>
        <label>NUP58</label>
    </interactant>
    <organismsDiffer>false</organismsDiffer>
    <experiments>3</experiments>
</comment>
<comment type="interaction">
    <interactant intactId="EBI-2514791">
        <id>Q96CS2</id>
    </interactant>
    <interactant intactId="EBI-347978">
        <id>P37198</id>
        <label>NUP62</label>
    </interactant>
    <organismsDiffer>false</organismsDiffer>
    <experiments>3</experiments>
</comment>
<comment type="interaction">
    <interactant intactId="EBI-2514791">
        <id>Q96CS2</id>
    </interactant>
    <interactant intactId="EBI-10173858">
        <id>Q96M63</id>
        <label>ODAD1</label>
    </interactant>
    <organismsDiffer>false</organismsDiffer>
    <experiments>4</experiments>
</comment>
<comment type="interaction">
    <interactant intactId="EBI-2514791">
        <id>Q96CS2</id>
    </interactant>
    <interactant intactId="EBI-1105124">
        <id>Q5VU43</id>
        <label>PDE4DIP</label>
    </interactant>
    <organismsDiffer>false</organismsDiffer>
    <experiments>3</experiments>
</comment>
<comment type="interaction">
    <interactant intactId="EBI-2514791">
        <id>Q96CS2</id>
    </interactant>
    <interactant intactId="EBI-602382">
        <id>Q16512</id>
        <label>PKN1</label>
    </interactant>
    <organismsDiffer>false</organismsDiffer>
    <experiments>3</experiments>
</comment>
<comment type="interaction">
    <interactant intactId="EBI-2514791">
        <id>Q96CS2</id>
    </interactant>
    <interactant intactId="EBI-5452779">
        <id>Q9BUI4</id>
        <label>POLR3C</label>
    </interactant>
    <organismsDiffer>false</organismsDiffer>
    <experiments>3</experiments>
</comment>
<comment type="interaction">
    <interactant intactId="EBI-2514791">
        <id>Q96CS2</id>
    </interactant>
    <interactant intactId="EBI-413317">
        <id>Q96R06</id>
        <label>SPAG5</label>
    </interactant>
    <organismsDiffer>false</organismsDiffer>
    <experiments>3</experiments>
</comment>
<comment type="interaction">
    <interactant intactId="EBI-2514791">
        <id>Q96CS2</id>
    </interactant>
    <interactant intactId="EBI-10172867">
        <id>A1L4H1</id>
        <label>SSC5D</label>
    </interactant>
    <organismsDiffer>false</organismsDiffer>
    <experiments>3</experiments>
</comment>
<comment type="interaction">
    <interactant intactId="EBI-2514791">
        <id>Q96CS2</id>
    </interactant>
    <interactant intactId="EBI-714135">
        <id>O75558</id>
        <label>STX11</label>
    </interactant>
    <organismsDiffer>false</organismsDiffer>
    <experiments>3</experiments>
</comment>
<comment type="interaction">
    <interactant intactId="EBI-2514791">
        <id>Q96CS2</id>
    </interactant>
    <interactant intactId="EBI-6872807">
        <id>Q8N0S2</id>
        <label>SYCE1</label>
    </interactant>
    <organismsDiffer>false</organismsDiffer>
    <experiments>3</experiments>
</comment>
<comment type="interaction">
    <interactant intactId="EBI-2514791">
        <id>Q96CS2</id>
    </interactant>
    <interactant intactId="EBI-10283466">
        <id>A1L190</id>
        <label>SYCE3</label>
    </interactant>
    <organismsDiffer>false</organismsDiffer>
    <experiments>4</experiments>
</comment>
<comment type="interaction">
    <interactant intactId="EBI-2514791">
        <id>Q96CS2</id>
    </interactant>
    <interactant intactId="EBI-747736">
        <id>Q15561</id>
        <label>TEAD4</label>
    </interactant>
    <organismsDiffer>false</organismsDiffer>
    <experiments>3</experiments>
</comment>
<comment type="interaction">
    <interactant intactId="EBI-2514791">
        <id>Q96CS2</id>
    </interactant>
    <interactant intactId="EBI-1105213">
        <id>Q9UBB9</id>
        <label>TFIP11</label>
    </interactant>
    <organismsDiffer>false</organismsDiffer>
    <experiments>3</experiments>
</comment>
<comment type="interaction">
    <interactant intactId="EBI-2514791">
        <id>Q96CS2</id>
    </interactant>
    <interactant intactId="EBI-10178002">
        <id>P0C1Z6-2</id>
        <label>TFPT</label>
    </interactant>
    <organismsDiffer>false</organismsDiffer>
    <experiments>3</experiments>
</comment>
<comment type="interaction">
    <interactant intactId="EBI-2514791">
        <id>Q96CS2</id>
    </interactant>
    <interactant intactId="EBI-359224">
        <id>Q13077</id>
        <label>TRAF1</label>
    </interactant>
    <organismsDiffer>false</organismsDiffer>
    <experiments>3</experiments>
</comment>
<comment type="interaction">
    <interactant intactId="EBI-2514791">
        <id>Q96CS2</id>
    </interactant>
    <interactant intactId="EBI-740098">
        <id>P36406</id>
        <label>TRIM23</label>
    </interactant>
    <organismsDiffer>false</organismsDiffer>
    <experiments>3</experiments>
</comment>
<comment type="interaction">
    <interactant intactId="EBI-2514791">
        <id>Q96CS2</id>
    </interactant>
    <interactant intactId="EBI-719493">
        <id>P14373</id>
        <label>TRIM27</label>
    </interactant>
    <organismsDiffer>false</organismsDiffer>
    <experiments>3</experiments>
</comment>
<comment type="interaction">
    <interactant intactId="EBI-2514791">
        <id>Q96CS2</id>
    </interactant>
    <interactant intactId="EBI-2130429">
        <id>Q9BYV2</id>
        <label>TRIM54</label>
    </interactant>
    <organismsDiffer>false</organismsDiffer>
    <experiments>3</experiments>
</comment>
<comment type="interaction">
    <interactant intactId="EBI-2514791">
        <id>Q96CS2</id>
    </interactant>
    <interactant intactId="EBI-749955">
        <id>Q86WT6</id>
        <label>TRIM69</label>
    </interactant>
    <organismsDiffer>false</organismsDiffer>
    <experiments>3</experiments>
</comment>
<comment type="interaction">
    <interactant intactId="EBI-2514791">
        <id>Q96CS2</id>
    </interactant>
    <interactant intactId="EBI-11525489">
        <id>Q86WT6-2</id>
        <label>TRIM69</label>
    </interactant>
    <organismsDiffer>false</organismsDiffer>
    <experiments>4</experiments>
</comment>
<comment type="interaction">
    <interactant intactId="EBI-2514791">
        <id>Q96CS2</id>
    </interactant>
    <interactant intactId="EBI-346882">
        <id>Q99816</id>
        <label>TSG101</label>
    </interactant>
    <organismsDiffer>false</organismsDiffer>
    <experiments>6</experiments>
</comment>
<comment type="interaction">
    <interactant intactId="EBI-2514791">
        <id>Q96CS2</id>
    </interactant>
    <interactant intactId="EBI-2932492">
        <id>Q99757</id>
        <label>TXN2</label>
    </interactant>
    <organismsDiffer>false</organismsDiffer>
    <experiments>3</experiments>
</comment>
<comment type="interaction">
    <interactant intactId="EBI-2514791">
        <id>Q96CS2</id>
    </interactant>
    <interactant intactId="EBI-739895">
        <id>Q8N6Y0</id>
        <label>USHBP1</label>
    </interactant>
    <organismsDiffer>false</organismsDiffer>
    <experiments>3</experiments>
</comment>
<comment type="interaction">
    <interactant intactId="EBI-2514791">
        <id>Q96CS2</id>
    </interactant>
    <interactant intactId="EBI-2559305">
        <id>A5D8V6</id>
        <label>VPS37C</label>
    </interactant>
    <organismsDiffer>false</organismsDiffer>
    <experiments>3</experiments>
</comment>
<comment type="interaction">
    <interactant intactId="EBI-2514791">
        <id>Q96CS2</id>
    </interactant>
    <interactant intactId="EBI-2799833">
        <id>Q8N1B4</id>
        <label>VPS52</label>
    </interactant>
    <organismsDiffer>false</organismsDiffer>
    <experiments>3</experiments>
</comment>
<comment type="interaction">
    <interactant intactId="EBI-2514791">
        <id>Q96CS2</id>
    </interactant>
    <interactant intactId="EBI-712969">
        <id>Q9Y3C0</id>
        <label>WASHC3</label>
    </interactant>
    <organismsDiffer>false</organismsDiffer>
    <experiments>10</experiments>
</comment>
<comment type="interaction">
    <interactant intactId="EBI-11742270">
        <id>Q96CS2-2</id>
    </interactant>
    <interactant intactId="EBI-739624">
        <id>Q8NHQ1</id>
        <label>CEP70</label>
    </interactant>
    <organismsDiffer>false</organismsDiffer>
    <experiments>3</experiments>
</comment>
<comment type="subcellular location">
    <subcellularLocation>
        <location evidence="7">Cytoplasm</location>
    </subcellularLocation>
    <subcellularLocation>
        <location evidence="3 4">Cytoplasm</location>
        <location evidence="3 4">Cytoskeleton</location>
        <location evidence="3 4">Microtubule organizing center</location>
        <location evidence="3 4">Centrosome</location>
    </subcellularLocation>
    <subcellularLocation>
        <location evidence="2 3 4 5">Cytoplasm</location>
        <location evidence="2 3 4 5">Cytoskeleton</location>
        <location evidence="2 3 4 5">Spindle</location>
    </subcellularLocation>
    <subcellularLocation>
        <location evidence="8">Cytoplasm</location>
        <location evidence="8">Cytoskeleton</location>
        <location evidence="8">Spindle pole</location>
    </subcellularLocation>
    <text evidence="2 5">Localizes with the spindle poles in mitotic cells. In metaphase, localizes to the mitotic asters and is highly punctate on the microtubule array. During later stages of mitosis, remains on the spindle but is not present at the interzone, and is finally observed at the microtubule bundles proximal to the midbody, clearly excluded from the midbody. In contrast, does not colocalize with the tubulin cytoskeleton in interphase cells. In interphase, localized at the centrosome and diffusely in the cytoplasm. Localizes to mitotic spindle microtubules.</text>
</comment>
<comment type="alternative products">
    <event type="alternative splicing"/>
    <isoform>
        <id>Q96CS2-1</id>
        <name>1</name>
        <sequence type="displayed"/>
    </isoform>
    <isoform>
        <id>Q96CS2-2</id>
        <name>2</name>
        <sequence type="described" ref="VSP_010781"/>
    </isoform>
</comment>
<comment type="tissue specificity">
    <text evidence="2">Widely expressed. Expressed in pancreas, kidney, skeletal muscle, liver and heart. Weakly expressed in lung, brain and placenta.</text>
</comment>
<comment type="miscellaneous">
    <text>HAUS1-depleted cells retain functional cell cycle checkpoints, but the depletion decreases the G2/M cell cycle compartment and induces apoptosis. The protein level remains constant through the cell cycle.</text>
</comment>
<comment type="similarity">
    <text evidence="7">Belongs to the HAUS1 family.</text>
</comment>
<comment type="sequence caution" evidence="7">
    <conflict type="frameshift">
        <sequence resource="EMBL-CDS" id="BAC05036"/>
    </conflict>
</comment>
<reference key="1">
    <citation type="journal article" date="2004" name="Mol. Cell. Biol.">
        <title>Human enhancer of invasion-cluster, a coiled-coil protein required for passage through mitosis.</title>
        <authorList>
            <person name="Einarson M.B."/>
            <person name="Cukierman E."/>
            <person name="Compton D.A."/>
            <person name="Golemis E.A."/>
        </authorList>
    </citation>
    <scope>NUCLEOTIDE SEQUENCE [MRNA] (ISOFORM 1)</scope>
    <scope>FUNCTION</scope>
    <scope>SUBCELLULAR LOCATION</scope>
    <scope>TISSUE SPECIFICITY</scope>
    <scope>INTERACTION WITH MICROTUBULES</scope>
    <source>
        <tissue>Cervix carcinoma</tissue>
    </source>
</reference>
<reference key="2">
    <citation type="journal article" date="2004" name="Nat. Genet.">
        <title>Complete sequencing and characterization of 21,243 full-length human cDNAs.</title>
        <authorList>
            <person name="Ota T."/>
            <person name="Suzuki Y."/>
            <person name="Nishikawa T."/>
            <person name="Otsuki T."/>
            <person name="Sugiyama T."/>
            <person name="Irie R."/>
            <person name="Wakamatsu A."/>
            <person name="Hayashi K."/>
            <person name="Sato H."/>
            <person name="Nagai K."/>
            <person name="Kimura K."/>
            <person name="Makita H."/>
            <person name="Sekine M."/>
            <person name="Obayashi M."/>
            <person name="Nishi T."/>
            <person name="Shibahara T."/>
            <person name="Tanaka T."/>
            <person name="Ishii S."/>
            <person name="Yamamoto J."/>
            <person name="Saito K."/>
            <person name="Kawai Y."/>
            <person name="Isono Y."/>
            <person name="Nakamura Y."/>
            <person name="Nagahari K."/>
            <person name="Murakami K."/>
            <person name="Yasuda T."/>
            <person name="Iwayanagi T."/>
            <person name="Wagatsuma M."/>
            <person name="Shiratori A."/>
            <person name="Sudo H."/>
            <person name="Hosoiri T."/>
            <person name="Kaku Y."/>
            <person name="Kodaira H."/>
            <person name="Kondo H."/>
            <person name="Sugawara M."/>
            <person name="Takahashi M."/>
            <person name="Kanda K."/>
            <person name="Yokoi T."/>
            <person name="Furuya T."/>
            <person name="Kikkawa E."/>
            <person name="Omura Y."/>
            <person name="Abe K."/>
            <person name="Kamihara K."/>
            <person name="Katsuta N."/>
            <person name="Sato K."/>
            <person name="Tanikawa M."/>
            <person name="Yamazaki M."/>
            <person name="Ninomiya K."/>
            <person name="Ishibashi T."/>
            <person name="Yamashita H."/>
            <person name="Murakawa K."/>
            <person name="Fujimori K."/>
            <person name="Tanai H."/>
            <person name="Kimata M."/>
            <person name="Watanabe M."/>
            <person name="Hiraoka S."/>
            <person name="Chiba Y."/>
            <person name="Ishida S."/>
            <person name="Ono Y."/>
            <person name="Takiguchi S."/>
            <person name="Watanabe S."/>
            <person name="Yosida M."/>
            <person name="Hotuta T."/>
            <person name="Kusano J."/>
            <person name="Kanehori K."/>
            <person name="Takahashi-Fujii A."/>
            <person name="Hara H."/>
            <person name="Tanase T.-O."/>
            <person name="Nomura Y."/>
            <person name="Togiya S."/>
            <person name="Komai F."/>
            <person name="Hara R."/>
            <person name="Takeuchi K."/>
            <person name="Arita M."/>
            <person name="Imose N."/>
            <person name="Musashino K."/>
            <person name="Yuuki H."/>
            <person name="Oshima A."/>
            <person name="Sasaki N."/>
            <person name="Aotsuka S."/>
            <person name="Yoshikawa Y."/>
            <person name="Matsunawa H."/>
            <person name="Ichihara T."/>
            <person name="Shiohata N."/>
            <person name="Sano S."/>
            <person name="Moriya S."/>
            <person name="Momiyama H."/>
            <person name="Satoh N."/>
            <person name="Takami S."/>
            <person name="Terashima Y."/>
            <person name="Suzuki O."/>
            <person name="Nakagawa S."/>
            <person name="Senoh A."/>
            <person name="Mizoguchi H."/>
            <person name="Goto Y."/>
            <person name="Shimizu F."/>
            <person name="Wakebe H."/>
            <person name="Hishigaki H."/>
            <person name="Watanabe T."/>
            <person name="Sugiyama A."/>
            <person name="Takemoto M."/>
            <person name="Kawakami B."/>
            <person name="Yamazaki M."/>
            <person name="Watanabe K."/>
            <person name="Kumagai A."/>
            <person name="Itakura S."/>
            <person name="Fukuzumi Y."/>
            <person name="Fujimori Y."/>
            <person name="Komiyama M."/>
            <person name="Tashiro H."/>
            <person name="Tanigami A."/>
            <person name="Fujiwara T."/>
            <person name="Ono T."/>
            <person name="Yamada K."/>
            <person name="Fujii Y."/>
            <person name="Ozaki K."/>
            <person name="Hirao M."/>
            <person name="Ohmori Y."/>
            <person name="Kawabata A."/>
            <person name="Hikiji T."/>
            <person name="Kobatake N."/>
            <person name="Inagaki H."/>
            <person name="Ikema Y."/>
            <person name="Okamoto S."/>
            <person name="Okitani R."/>
            <person name="Kawakami T."/>
            <person name="Noguchi S."/>
            <person name="Itoh T."/>
            <person name="Shigeta K."/>
            <person name="Senba T."/>
            <person name="Matsumura K."/>
            <person name="Nakajima Y."/>
            <person name="Mizuno T."/>
            <person name="Morinaga M."/>
            <person name="Sasaki M."/>
            <person name="Togashi T."/>
            <person name="Oyama M."/>
            <person name="Hata H."/>
            <person name="Watanabe M."/>
            <person name="Komatsu T."/>
            <person name="Mizushima-Sugano J."/>
            <person name="Satoh T."/>
            <person name="Shirai Y."/>
            <person name="Takahashi Y."/>
            <person name="Nakagawa K."/>
            <person name="Okumura K."/>
            <person name="Nagase T."/>
            <person name="Nomura N."/>
            <person name="Kikuchi H."/>
            <person name="Masuho Y."/>
            <person name="Yamashita R."/>
            <person name="Nakai K."/>
            <person name="Yada T."/>
            <person name="Nakamura Y."/>
            <person name="Ohara O."/>
            <person name="Isogai T."/>
            <person name="Sugano S."/>
        </authorList>
    </citation>
    <scope>NUCLEOTIDE SEQUENCE [LARGE SCALE MRNA] (ISOFORM 1)</scope>
    <source>
        <tissue>Skeletal muscle</tissue>
        <tissue>Testis</tissue>
    </source>
</reference>
<reference key="3">
    <citation type="journal article" date="2004" name="Genome Res.">
        <title>The status, quality, and expansion of the NIH full-length cDNA project: the Mammalian Gene Collection (MGC).</title>
        <authorList>
            <consortium name="The MGC Project Team"/>
        </authorList>
    </citation>
    <scope>NUCLEOTIDE SEQUENCE [LARGE SCALE MRNA] (ISOFORMS 1 AND 2)</scope>
    <source>
        <tissue>Choriocarcinoma</tissue>
        <tissue>Chronic myeloid leukemia cell</tissue>
    </source>
</reference>
<reference key="4">
    <citation type="journal article" date="2009" name="Curr. Biol.">
        <title>HAUS, the 8-subunit human augmin complex, regulates centrosome and spindle integrity.</title>
        <authorList>
            <person name="Lawo S."/>
            <person name="Bashkurov M."/>
            <person name="Mullin M."/>
            <person name="Ferreria M.G."/>
            <person name="Kittler R."/>
            <person name="Habermann B."/>
            <person name="Tagliaferro A."/>
            <person name="Poser I."/>
            <person name="Hutchins J.R.A."/>
            <person name="Hegemann B."/>
            <person name="Pinchev D."/>
            <person name="Buchholz F."/>
            <person name="Peters J.-M."/>
            <person name="Hyman A.A."/>
            <person name="Gingras A.-C."/>
            <person name="Pelletier L."/>
        </authorList>
    </citation>
    <scope>IDENTIFICATION IN THE HAUS AUGMIN-LIKE COMPLEX</scope>
    <scope>FUNCTION</scope>
    <scope>SUBCELLULAR LOCATION</scope>
</reference>
<reference key="5">
    <citation type="journal article" date="2009" name="Proc. Natl. Acad. Sci. U.S.A.">
        <title>The augmin complex plays a critical role in spindle microtubule generation for mitotic progression and cytokinesis in human cells.</title>
        <authorList>
            <person name="Uehara R."/>
            <person name="Nozawa R.-S."/>
            <person name="Tomioka A."/>
            <person name="Petry S."/>
            <person name="Vale R.D."/>
            <person name="Obuse C."/>
            <person name="Goshima G."/>
        </authorList>
    </citation>
    <scope>IDENTIFICATION IN THE HAUS AUGMIN-LIKE COMPLEX</scope>
    <scope>FUNCTION</scope>
    <scope>SUBCELLULAR LOCATION</scope>
</reference>
<reference key="6">
    <citation type="journal article" date="2011" name="BMC Syst. Biol.">
        <title>Initial characterization of the human central proteome.</title>
        <authorList>
            <person name="Burkard T.R."/>
            <person name="Planyavsky M."/>
            <person name="Kaupe I."/>
            <person name="Breitwieser F.P."/>
            <person name="Buerckstuemmer T."/>
            <person name="Bennett K.L."/>
            <person name="Superti-Furga G."/>
            <person name="Colinge J."/>
        </authorList>
    </citation>
    <scope>IDENTIFICATION BY MASS SPECTROMETRY [LARGE SCALE ANALYSIS]</scope>
</reference>
<reference key="7">
    <citation type="journal article" date="2015" name="Proteomics">
        <title>N-terminome analysis of the human mitochondrial proteome.</title>
        <authorList>
            <person name="Vaca Jacome A.S."/>
            <person name="Rabilloud T."/>
            <person name="Schaeffer-Reiss C."/>
            <person name="Rompais M."/>
            <person name="Ayoub D."/>
            <person name="Lane L."/>
            <person name="Bairoch A."/>
            <person name="Van Dorsselaer A."/>
            <person name="Carapito C."/>
        </authorList>
    </citation>
    <scope>IDENTIFICATION BY MASS SPECTROMETRY [LARGE SCALE ANALYSIS]</scope>
</reference>
<reference key="8">
    <citation type="journal article" date="2019" name="J. Biol. Chem.">
        <title>The microtubule-associated protein EML3 regulates mitotic spindle assembly by recruiting the Augmin complex to spindle microtubules.</title>
        <authorList>
            <person name="Luo J."/>
            <person name="Yang B."/>
            <person name="Xin G."/>
            <person name="Sun M."/>
            <person name="Zhang B."/>
            <person name="Guo X."/>
            <person name="Jiang Q."/>
            <person name="Zhang C."/>
        </authorList>
    </citation>
    <scope>INTERACTION WITH EML3</scope>
    <scope>SUBCELLULAR LOCATION</scope>
</reference>
<gene>
    <name type="primary">HAUS1</name>
    <name type="synonym">CCDC5</name>
    <name type="synonym">HEIC</name>
</gene>
<dbReference type="EMBL" id="AY360137">
    <property type="protein sequence ID" value="AAQ63649.1"/>
    <property type="molecule type" value="mRNA"/>
</dbReference>
<dbReference type="EMBL" id="AK097403">
    <property type="protein sequence ID" value="BAC05036.1"/>
    <property type="status" value="ALT_FRAME"/>
    <property type="molecule type" value="mRNA"/>
</dbReference>
<dbReference type="EMBL" id="AK315605">
    <property type="protein sequence ID" value="BAG37974.1"/>
    <property type="molecule type" value="mRNA"/>
</dbReference>
<dbReference type="EMBL" id="BC005958">
    <property type="protein sequence ID" value="AAH05958.1"/>
    <property type="molecule type" value="mRNA"/>
</dbReference>
<dbReference type="EMBL" id="BC014003">
    <property type="protein sequence ID" value="AAH14003.1"/>
    <property type="molecule type" value="mRNA"/>
</dbReference>
<dbReference type="CCDS" id="CCDS11928.1">
    <molecule id="Q96CS2-1"/>
</dbReference>
<dbReference type="RefSeq" id="NP_612452.1">
    <molecule id="Q96CS2-1"/>
    <property type="nucleotide sequence ID" value="NM_138443.4"/>
</dbReference>
<dbReference type="PDB" id="7SQK">
    <property type="method" value="EM"/>
    <property type="resolution" value="8.00 A"/>
    <property type="chains" value="A=1-278"/>
</dbReference>
<dbReference type="PDBsum" id="7SQK"/>
<dbReference type="EMDB" id="EMD-25387"/>
<dbReference type="SMR" id="Q96CS2"/>
<dbReference type="BioGRID" id="125412">
    <property type="interactions" value="192"/>
</dbReference>
<dbReference type="ComplexPortal" id="CPX-1847">
    <property type="entry name" value="HAUS complex"/>
</dbReference>
<dbReference type="CORUM" id="Q96CS2"/>
<dbReference type="DIP" id="DIP-48835N"/>
<dbReference type="FunCoup" id="Q96CS2">
    <property type="interactions" value="942"/>
</dbReference>
<dbReference type="IntAct" id="Q96CS2">
    <property type="interactions" value="156"/>
</dbReference>
<dbReference type="MINT" id="Q96CS2"/>
<dbReference type="STRING" id="9606.ENSP00000282058"/>
<dbReference type="iPTMnet" id="Q96CS2"/>
<dbReference type="PhosphoSitePlus" id="Q96CS2"/>
<dbReference type="BioMuta" id="HAUS1"/>
<dbReference type="DMDM" id="50400607"/>
<dbReference type="jPOST" id="Q96CS2"/>
<dbReference type="MassIVE" id="Q96CS2"/>
<dbReference type="PaxDb" id="9606-ENSP00000282058"/>
<dbReference type="PeptideAtlas" id="Q96CS2"/>
<dbReference type="ProteomicsDB" id="76212">
    <molecule id="Q96CS2-1"/>
</dbReference>
<dbReference type="ProteomicsDB" id="76213">
    <molecule id="Q96CS2-2"/>
</dbReference>
<dbReference type="Pumba" id="Q96CS2"/>
<dbReference type="Antibodypedia" id="22454">
    <property type="antibodies" value="99 antibodies from 19 providers"/>
</dbReference>
<dbReference type="DNASU" id="115106"/>
<dbReference type="Ensembl" id="ENST00000282058.11">
    <molecule id="Q96CS2-1"/>
    <property type="protein sequence ID" value="ENSP00000282058.5"/>
    <property type="gene ID" value="ENSG00000152240.13"/>
</dbReference>
<dbReference type="GeneID" id="115106"/>
<dbReference type="KEGG" id="hsa:115106"/>
<dbReference type="MANE-Select" id="ENST00000282058.11">
    <property type="protein sequence ID" value="ENSP00000282058.5"/>
    <property type="RefSeq nucleotide sequence ID" value="NM_138443.4"/>
    <property type="RefSeq protein sequence ID" value="NP_612452.1"/>
</dbReference>
<dbReference type="UCSC" id="uc002lbu.3">
    <molecule id="Q96CS2-1"/>
    <property type="organism name" value="human"/>
</dbReference>
<dbReference type="AGR" id="HGNC:25174"/>
<dbReference type="CTD" id="115106"/>
<dbReference type="DisGeNET" id="115106"/>
<dbReference type="GeneCards" id="HAUS1"/>
<dbReference type="HGNC" id="HGNC:25174">
    <property type="gene designation" value="HAUS1"/>
</dbReference>
<dbReference type="HPA" id="ENSG00000152240">
    <property type="expression patterns" value="Low tissue specificity"/>
</dbReference>
<dbReference type="MIM" id="608775">
    <property type="type" value="gene"/>
</dbReference>
<dbReference type="neXtProt" id="NX_Q96CS2"/>
<dbReference type="OpenTargets" id="ENSG00000152240"/>
<dbReference type="PharmGKB" id="PA165429013"/>
<dbReference type="VEuPathDB" id="HostDB:ENSG00000152240"/>
<dbReference type="eggNOG" id="ENOG502QSQA">
    <property type="taxonomic scope" value="Eukaryota"/>
</dbReference>
<dbReference type="GeneTree" id="ENSGT00390000006029"/>
<dbReference type="HOGENOM" id="CLU_063322_0_0_1"/>
<dbReference type="InParanoid" id="Q96CS2"/>
<dbReference type="OMA" id="CEAQMES"/>
<dbReference type="OrthoDB" id="5372507at2759"/>
<dbReference type="PAN-GO" id="Q96CS2">
    <property type="GO annotations" value="4 GO annotations based on evolutionary models"/>
</dbReference>
<dbReference type="PhylomeDB" id="Q96CS2"/>
<dbReference type="TreeFam" id="TF331717"/>
<dbReference type="PathwayCommons" id="Q96CS2"/>
<dbReference type="Reactome" id="R-HSA-2565942">
    <property type="pathway name" value="Regulation of PLK1 Activity at G2/M Transition"/>
</dbReference>
<dbReference type="Reactome" id="R-HSA-380259">
    <property type="pathway name" value="Loss of Nlp from mitotic centrosomes"/>
</dbReference>
<dbReference type="Reactome" id="R-HSA-380270">
    <property type="pathway name" value="Recruitment of mitotic centrosome proteins and complexes"/>
</dbReference>
<dbReference type="Reactome" id="R-HSA-380284">
    <property type="pathway name" value="Loss of proteins required for interphase microtubule organization from the centrosome"/>
</dbReference>
<dbReference type="Reactome" id="R-HSA-380320">
    <property type="pathway name" value="Recruitment of NuMA to mitotic centrosomes"/>
</dbReference>
<dbReference type="Reactome" id="R-HSA-5620912">
    <property type="pathway name" value="Anchoring of the basal body to the plasma membrane"/>
</dbReference>
<dbReference type="Reactome" id="R-HSA-8854518">
    <property type="pathway name" value="AURKA Activation by TPX2"/>
</dbReference>
<dbReference type="SignaLink" id="Q96CS2"/>
<dbReference type="SIGNOR" id="Q96CS2"/>
<dbReference type="BioGRID-ORCS" id="115106">
    <property type="hits" value="786 hits in 1161 CRISPR screens"/>
</dbReference>
<dbReference type="ChiTaRS" id="HAUS1">
    <property type="organism name" value="human"/>
</dbReference>
<dbReference type="GeneWiki" id="CCDC5"/>
<dbReference type="GenomeRNAi" id="115106"/>
<dbReference type="Pharos" id="Q96CS2">
    <property type="development level" value="Tbio"/>
</dbReference>
<dbReference type="PRO" id="PR:Q96CS2"/>
<dbReference type="Proteomes" id="UP000005640">
    <property type="component" value="Chromosome 18"/>
</dbReference>
<dbReference type="RNAct" id="Q96CS2">
    <property type="molecule type" value="protein"/>
</dbReference>
<dbReference type="Bgee" id="ENSG00000152240">
    <property type="expression patterns" value="Expressed in ganglionic eminence and 176 other cell types or tissues"/>
</dbReference>
<dbReference type="ExpressionAtlas" id="Q96CS2">
    <property type="expression patterns" value="baseline and differential"/>
</dbReference>
<dbReference type="GO" id="GO:0005813">
    <property type="term" value="C:centrosome"/>
    <property type="evidence" value="ECO:0000314"/>
    <property type="project" value="HPA"/>
</dbReference>
<dbReference type="GO" id="GO:0005829">
    <property type="term" value="C:cytosol"/>
    <property type="evidence" value="ECO:0000314"/>
    <property type="project" value="HPA"/>
</dbReference>
<dbReference type="GO" id="GO:0070652">
    <property type="term" value="C:HAUS complex"/>
    <property type="evidence" value="ECO:0000314"/>
    <property type="project" value="UniProtKB"/>
</dbReference>
<dbReference type="GO" id="GO:1990498">
    <property type="term" value="C:mitotic spindle microtubule"/>
    <property type="evidence" value="ECO:0000314"/>
    <property type="project" value="UniProtKB"/>
</dbReference>
<dbReference type="GO" id="GO:0000922">
    <property type="term" value="C:spindle pole"/>
    <property type="evidence" value="ECO:0007669"/>
    <property type="project" value="UniProtKB-SubCell"/>
</dbReference>
<dbReference type="GO" id="GO:0051301">
    <property type="term" value="P:cell division"/>
    <property type="evidence" value="ECO:0007669"/>
    <property type="project" value="UniProtKB-KW"/>
</dbReference>
<dbReference type="GO" id="GO:0007098">
    <property type="term" value="P:centrosome cycle"/>
    <property type="evidence" value="ECO:0000315"/>
    <property type="project" value="UniProtKB"/>
</dbReference>
<dbReference type="GO" id="GO:0010968">
    <property type="term" value="P:regulation of microtubule nucleation"/>
    <property type="evidence" value="ECO:0000303"/>
    <property type="project" value="ComplexPortal"/>
</dbReference>
<dbReference type="GO" id="GO:0051225">
    <property type="term" value="P:spindle assembly"/>
    <property type="evidence" value="ECO:0000315"/>
    <property type="project" value="UniProtKB"/>
</dbReference>
<dbReference type="InterPro" id="IPR026243">
    <property type="entry name" value="HAUS1"/>
</dbReference>
<dbReference type="PANTHER" id="PTHR31570">
    <property type="entry name" value="HAUS AUGMIN-LIKE COMPLEX SUBUNIT 1"/>
    <property type="match status" value="1"/>
</dbReference>
<dbReference type="PANTHER" id="PTHR31570:SF1">
    <property type="entry name" value="HAUS AUGMIN-LIKE COMPLEX SUBUNIT 1"/>
    <property type="match status" value="1"/>
</dbReference>
<dbReference type="PRINTS" id="PR02087">
    <property type="entry name" value="HAUSAUGMINL1"/>
</dbReference>
<keyword id="KW-0002">3D-structure</keyword>
<keyword id="KW-0025">Alternative splicing</keyword>
<keyword id="KW-0131">Cell cycle</keyword>
<keyword id="KW-0132">Cell division</keyword>
<keyword id="KW-0175">Coiled coil</keyword>
<keyword id="KW-0963">Cytoplasm</keyword>
<keyword id="KW-0206">Cytoskeleton</keyword>
<keyword id="KW-0493">Microtubule</keyword>
<keyword id="KW-0498">Mitosis</keyword>
<keyword id="KW-1267">Proteomics identification</keyword>
<keyword id="KW-1185">Reference proteome</keyword>
<feature type="chain" id="PRO_0000089395" description="HAUS augmin-like complex subunit 1">
    <location>
        <begin position="1"/>
        <end position="278"/>
    </location>
</feature>
<feature type="coiled-coil region" evidence="1">
    <location>
        <begin position="49"/>
        <end position="79"/>
    </location>
</feature>
<feature type="coiled-coil region" evidence="1">
    <location>
        <begin position="124"/>
        <end position="177"/>
    </location>
</feature>
<feature type="coiled-coil region" evidence="1">
    <location>
        <begin position="249"/>
        <end position="277"/>
    </location>
</feature>
<feature type="splice variant" id="VSP_010781" description="In isoform 2." evidence="6">
    <location>
        <begin position="1"/>
        <end position="76"/>
    </location>
</feature>
<accession>Q96CS2</accession>
<accession>B2RDM7</accession>
<accession>Q8N837</accession>
<proteinExistence type="evidence at protein level"/>
<organism>
    <name type="scientific">Homo sapiens</name>
    <name type="common">Human</name>
    <dbReference type="NCBI Taxonomy" id="9606"/>
    <lineage>
        <taxon>Eukaryota</taxon>
        <taxon>Metazoa</taxon>
        <taxon>Chordata</taxon>
        <taxon>Craniata</taxon>
        <taxon>Vertebrata</taxon>
        <taxon>Euteleostomi</taxon>
        <taxon>Mammalia</taxon>
        <taxon>Eutheria</taxon>
        <taxon>Euarchontoglires</taxon>
        <taxon>Primates</taxon>
        <taxon>Haplorrhini</taxon>
        <taxon>Catarrhini</taxon>
        <taxon>Hominidae</taxon>
        <taxon>Homo</taxon>
    </lineage>
</organism>
<sequence length="278" mass="31863">MEPQEERETQVAAWLKKIFGDHPIPQYEVNPRTTEILHHLSERNRVRDRDVYLVIEDLKQKASEYESEAKYLQDLLMESVNFSPANLSSTGSRYLNALVDSAVALETKDTSLASFIPAVNDLTSDLFRTKSKSEEIKIELEKLEKNLTATLVLEKCLQEDVKKAELHLSTERAKVDNRRQNMDFLKAKSEEFRFGIKAAEEQLSARGMDASLSHQSLVALSEKLARLKQQTIPLKKKLESYLDLMPNPSLAQVKIEEAKRELDSIEAELTRRVDMMEL</sequence>